<feature type="chain" id="PRO_0000212657" description="Cdc42 effector protein 1">
    <location>
        <begin position="1"/>
        <end position="391"/>
    </location>
</feature>
<feature type="domain" description="CRIB" evidence="3">
    <location>
        <begin position="38"/>
        <end position="52"/>
    </location>
</feature>
<feature type="repeat" description="1">
    <location>
        <begin position="220"/>
        <end position="226"/>
    </location>
</feature>
<feature type="repeat" description="2">
    <location>
        <begin position="227"/>
        <end position="233"/>
    </location>
</feature>
<feature type="repeat" description="3">
    <location>
        <begin position="234"/>
        <end position="240"/>
    </location>
</feature>
<feature type="repeat" description="4">
    <location>
        <begin position="241"/>
        <end position="247"/>
    </location>
</feature>
<feature type="repeat" description="5">
    <location>
        <begin position="248"/>
        <end position="254"/>
    </location>
</feature>
<feature type="repeat" description="6">
    <location>
        <begin position="255"/>
        <end position="261"/>
    </location>
</feature>
<feature type="repeat" description="7">
    <location>
        <begin position="262"/>
        <end position="268"/>
    </location>
</feature>
<feature type="repeat" description="8">
    <location>
        <begin position="269"/>
        <end position="275"/>
    </location>
</feature>
<feature type="region of interest" description="Disordered" evidence="4">
    <location>
        <begin position="163"/>
        <end position="189"/>
    </location>
</feature>
<feature type="region of interest" description="8 X 7 AA tandem repeats of [PT]-[AT]-A-[ENT]-[PT]-[PTS]-[AG]">
    <location>
        <begin position="220"/>
        <end position="275"/>
    </location>
</feature>
<feature type="region of interest" description="Disordered" evidence="4">
    <location>
        <begin position="221"/>
        <end position="338"/>
    </location>
</feature>
<feature type="region of interest" description="Disordered" evidence="4">
    <location>
        <begin position="354"/>
        <end position="391"/>
    </location>
</feature>
<feature type="compositionally biased region" description="Basic and acidic residues" evidence="4">
    <location>
        <begin position="167"/>
        <end position="179"/>
    </location>
</feature>
<feature type="compositionally biased region" description="Low complexity" evidence="4">
    <location>
        <begin position="236"/>
        <end position="270"/>
    </location>
</feature>
<feature type="compositionally biased region" description="Basic and acidic residues" evidence="4">
    <location>
        <begin position="327"/>
        <end position="338"/>
    </location>
</feature>
<feature type="compositionally biased region" description="Polar residues" evidence="4">
    <location>
        <begin position="364"/>
        <end position="377"/>
    </location>
</feature>
<feature type="compositionally biased region" description="Acidic residues" evidence="4">
    <location>
        <begin position="381"/>
        <end position="391"/>
    </location>
</feature>
<feature type="modified residue" description="Phosphoserine" evidence="11">
    <location>
        <position position="19"/>
    </location>
</feature>
<feature type="modified residue" description="Phosphoserine" evidence="14">
    <location>
        <position position="27"/>
    </location>
</feature>
<feature type="modified residue" description="Phosphothreonine" evidence="2">
    <location>
        <position position="34"/>
    </location>
</feature>
<feature type="modified residue" description="Phosphoserine" evidence="2">
    <location>
        <position position="39"/>
    </location>
</feature>
<feature type="modified residue" description="Omega-N-methylarginine" evidence="15">
    <location>
        <position position="53"/>
    </location>
</feature>
<feature type="modified residue" description="Phosphoserine" evidence="14">
    <location>
        <position position="65"/>
    </location>
</feature>
<feature type="modified residue" description="Phosphoserine" evidence="14">
    <location>
        <position position="73"/>
    </location>
</feature>
<feature type="modified residue" description="Phosphoserine" evidence="14">
    <location>
        <position position="77"/>
    </location>
</feature>
<feature type="modified residue" description="Phosphoserine" evidence="11 12 14">
    <location>
        <position position="101"/>
    </location>
</feature>
<feature type="modified residue" description="Phosphoserine" evidence="11 12 14">
    <location>
        <position position="113"/>
    </location>
</feature>
<feature type="modified residue" description="Phosphoserine" evidence="10 11 12 14">
    <location>
        <position position="121"/>
    </location>
</feature>
<feature type="modified residue" description="Phosphoserine" evidence="2">
    <location>
        <position position="139"/>
    </location>
</feature>
<feature type="modified residue" description="Phosphoserine" evidence="14">
    <location>
        <position position="180"/>
    </location>
</feature>
<feature type="modified residue" description="Phosphoserine" evidence="10 14">
    <location>
        <position position="190"/>
    </location>
</feature>
<feature type="modified residue" description="Phosphoserine" evidence="10 12 13 14 16">
    <location>
        <position position="192"/>
    </location>
</feature>
<feature type="modified residue" description="Phosphoserine" evidence="10 14">
    <location>
        <position position="195"/>
    </location>
</feature>
<feature type="modified residue" description="Phosphoserine" evidence="1">
    <location>
        <position position="303"/>
    </location>
</feature>
<feature type="modified residue" description="Phosphoserine" evidence="10 11 12 14">
    <location>
        <position position="350"/>
    </location>
</feature>
<feature type="modified residue" description="Phosphoserine" evidence="10 12 14">
    <location>
        <position position="353"/>
    </location>
</feature>
<feature type="splice variant" id="VSP_004325" description="In isoform 2." evidence="7 8">
    <location>
        <begin position="258"/>
        <end position="264"/>
    </location>
</feature>
<feature type="mutagenesis site" description="No binding with CDC42." evidence="5">
    <original>DMISHPLGDFRH</original>
    <variation>AMISHALGDFRA</variation>
    <location>
        <begin position="36"/>
        <end position="47"/>
    </location>
</feature>
<accession>Q00587</accession>
<accession>A8K825</accession>
<accession>Q96GN1</accession>
<organism>
    <name type="scientific">Homo sapiens</name>
    <name type="common">Human</name>
    <dbReference type="NCBI Taxonomy" id="9606"/>
    <lineage>
        <taxon>Eukaryota</taxon>
        <taxon>Metazoa</taxon>
        <taxon>Chordata</taxon>
        <taxon>Craniata</taxon>
        <taxon>Vertebrata</taxon>
        <taxon>Euteleostomi</taxon>
        <taxon>Mammalia</taxon>
        <taxon>Eutheria</taxon>
        <taxon>Euarchontoglires</taxon>
        <taxon>Primates</taxon>
        <taxon>Haplorrhini</taxon>
        <taxon>Catarrhini</taxon>
        <taxon>Hominidae</taxon>
        <taxon>Homo</taxon>
    </lineage>
</organism>
<proteinExistence type="evidence at protein level"/>
<protein>
    <recommendedName>
        <fullName>Cdc42 effector protein 1</fullName>
    </recommendedName>
    <alternativeName>
        <fullName>Binder of Rho GTPases 5</fullName>
    </alternativeName>
    <alternativeName>
        <fullName>Serum protein MSE55</fullName>
    </alternativeName>
</protein>
<reference key="1">
    <citation type="journal article" date="1992" name="J. Biol. Chem.">
        <title>cDNA cloning and molecular characterization of MSE55, a novel human serum constituent protein that displays bone marrow stromal/endothelial cell-specific expression.</title>
        <authorList>
            <person name="Bahou W.F."/>
            <person name="Campbell A.D."/>
            <person name="Wicha M.S."/>
        </authorList>
    </citation>
    <scope>NUCLEOTIDE SEQUENCE [MRNA] (ISOFORM 1)</scope>
</reference>
<reference key="2">
    <citation type="journal article" date="2004" name="Genome Biol.">
        <title>A genome annotation-driven approach to cloning the human ORFeome.</title>
        <authorList>
            <person name="Collins J.E."/>
            <person name="Wright C.L."/>
            <person name="Edwards C.A."/>
            <person name="Davis M.P."/>
            <person name="Grinham J.A."/>
            <person name="Cole C.G."/>
            <person name="Goward M.E."/>
            <person name="Aguado B."/>
            <person name="Mallya M."/>
            <person name="Mokrab Y."/>
            <person name="Huckle E.J."/>
            <person name="Beare D.M."/>
            <person name="Dunham I."/>
        </authorList>
    </citation>
    <scope>NUCLEOTIDE SEQUENCE [LARGE SCALE MRNA] (ISOFORM 1)</scope>
</reference>
<reference key="3">
    <citation type="journal article" date="2004" name="Nat. Genet.">
        <title>Complete sequencing and characterization of 21,243 full-length human cDNAs.</title>
        <authorList>
            <person name="Ota T."/>
            <person name="Suzuki Y."/>
            <person name="Nishikawa T."/>
            <person name="Otsuki T."/>
            <person name="Sugiyama T."/>
            <person name="Irie R."/>
            <person name="Wakamatsu A."/>
            <person name="Hayashi K."/>
            <person name="Sato H."/>
            <person name="Nagai K."/>
            <person name="Kimura K."/>
            <person name="Makita H."/>
            <person name="Sekine M."/>
            <person name="Obayashi M."/>
            <person name="Nishi T."/>
            <person name="Shibahara T."/>
            <person name="Tanaka T."/>
            <person name="Ishii S."/>
            <person name="Yamamoto J."/>
            <person name="Saito K."/>
            <person name="Kawai Y."/>
            <person name="Isono Y."/>
            <person name="Nakamura Y."/>
            <person name="Nagahari K."/>
            <person name="Murakami K."/>
            <person name="Yasuda T."/>
            <person name="Iwayanagi T."/>
            <person name="Wagatsuma M."/>
            <person name="Shiratori A."/>
            <person name="Sudo H."/>
            <person name="Hosoiri T."/>
            <person name="Kaku Y."/>
            <person name="Kodaira H."/>
            <person name="Kondo H."/>
            <person name="Sugawara M."/>
            <person name="Takahashi M."/>
            <person name="Kanda K."/>
            <person name="Yokoi T."/>
            <person name="Furuya T."/>
            <person name="Kikkawa E."/>
            <person name="Omura Y."/>
            <person name="Abe K."/>
            <person name="Kamihara K."/>
            <person name="Katsuta N."/>
            <person name="Sato K."/>
            <person name="Tanikawa M."/>
            <person name="Yamazaki M."/>
            <person name="Ninomiya K."/>
            <person name="Ishibashi T."/>
            <person name="Yamashita H."/>
            <person name="Murakawa K."/>
            <person name="Fujimori K."/>
            <person name="Tanai H."/>
            <person name="Kimata M."/>
            <person name="Watanabe M."/>
            <person name="Hiraoka S."/>
            <person name="Chiba Y."/>
            <person name="Ishida S."/>
            <person name="Ono Y."/>
            <person name="Takiguchi S."/>
            <person name="Watanabe S."/>
            <person name="Yosida M."/>
            <person name="Hotuta T."/>
            <person name="Kusano J."/>
            <person name="Kanehori K."/>
            <person name="Takahashi-Fujii A."/>
            <person name="Hara H."/>
            <person name="Tanase T.-O."/>
            <person name="Nomura Y."/>
            <person name="Togiya S."/>
            <person name="Komai F."/>
            <person name="Hara R."/>
            <person name="Takeuchi K."/>
            <person name="Arita M."/>
            <person name="Imose N."/>
            <person name="Musashino K."/>
            <person name="Yuuki H."/>
            <person name="Oshima A."/>
            <person name="Sasaki N."/>
            <person name="Aotsuka S."/>
            <person name="Yoshikawa Y."/>
            <person name="Matsunawa H."/>
            <person name="Ichihara T."/>
            <person name="Shiohata N."/>
            <person name="Sano S."/>
            <person name="Moriya S."/>
            <person name="Momiyama H."/>
            <person name="Satoh N."/>
            <person name="Takami S."/>
            <person name="Terashima Y."/>
            <person name="Suzuki O."/>
            <person name="Nakagawa S."/>
            <person name="Senoh A."/>
            <person name="Mizoguchi H."/>
            <person name="Goto Y."/>
            <person name="Shimizu F."/>
            <person name="Wakebe H."/>
            <person name="Hishigaki H."/>
            <person name="Watanabe T."/>
            <person name="Sugiyama A."/>
            <person name="Takemoto M."/>
            <person name="Kawakami B."/>
            <person name="Yamazaki M."/>
            <person name="Watanabe K."/>
            <person name="Kumagai A."/>
            <person name="Itakura S."/>
            <person name="Fukuzumi Y."/>
            <person name="Fujimori Y."/>
            <person name="Komiyama M."/>
            <person name="Tashiro H."/>
            <person name="Tanigami A."/>
            <person name="Fujiwara T."/>
            <person name="Ono T."/>
            <person name="Yamada K."/>
            <person name="Fujii Y."/>
            <person name="Ozaki K."/>
            <person name="Hirao M."/>
            <person name="Ohmori Y."/>
            <person name="Kawabata A."/>
            <person name="Hikiji T."/>
            <person name="Kobatake N."/>
            <person name="Inagaki H."/>
            <person name="Ikema Y."/>
            <person name="Okamoto S."/>
            <person name="Okitani R."/>
            <person name="Kawakami T."/>
            <person name="Noguchi S."/>
            <person name="Itoh T."/>
            <person name="Shigeta K."/>
            <person name="Senba T."/>
            <person name="Matsumura K."/>
            <person name="Nakajima Y."/>
            <person name="Mizuno T."/>
            <person name="Morinaga M."/>
            <person name="Sasaki M."/>
            <person name="Togashi T."/>
            <person name="Oyama M."/>
            <person name="Hata H."/>
            <person name="Watanabe M."/>
            <person name="Komatsu T."/>
            <person name="Mizushima-Sugano J."/>
            <person name="Satoh T."/>
            <person name="Shirai Y."/>
            <person name="Takahashi Y."/>
            <person name="Nakagawa K."/>
            <person name="Okumura K."/>
            <person name="Nagase T."/>
            <person name="Nomura N."/>
            <person name="Kikuchi H."/>
            <person name="Masuho Y."/>
            <person name="Yamashita R."/>
            <person name="Nakai K."/>
            <person name="Yada T."/>
            <person name="Nakamura Y."/>
            <person name="Ohara O."/>
            <person name="Isogai T."/>
            <person name="Sugano S."/>
        </authorList>
    </citation>
    <scope>NUCLEOTIDE SEQUENCE [LARGE SCALE MRNA] (ISOFORM 2)</scope>
    <source>
        <tissue>Mammary gland</tissue>
    </source>
</reference>
<reference key="4">
    <citation type="journal article" date="1999" name="Nature">
        <title>The DNA sequence of human chromosome 22.</title>
        <authorList>
            <person name="Dunham I."/>
            <person name="Hunt A.R."/>
            <person name="Collins J.E."/>
            <person name="Bruskiewich R."/>
            <person name="Beare D.M."/>
            <person name="Clamp M."/>
            <person name="Smink L.J."/>
            <person name="Ainscough R."/>
            <person name="Almeida J.P."/>
            <person name="Babbage A.K."/>
            <person name="Bagguley C."/>
            <person name="Bailey J."/>
            <person name="Barlow K.F."/>
            <person name="Bates K.N."/>
            <person name="Beasley O.P."/>
            <person name="Bird C.P."/>
            <person name="Blakey S.E."/>
            <person name="Bridgeman A.M."/>
            <person name="Buck D."/>
            <person name="Burgess J."/>
            <person name="Burrill W.D."/>
            <person name="Burton J."/>
            <person name="Carder C."/>
            <person name="Carter N.P."/>
            <person name="Chen Y."/>
            <person name="Clark G."/>
            <person name="Clegg S.M."/>
            <person name="Cobley V.E."/>
            <person name="Cole C.G."/>
            <person name="Collier R.E."/>
            <person name="Connor R."/>
            <person name="Conroy D."/>
            <person name="Corby N.R."/>
            <person name="Coville G.J."/>
            <person name="Cox A.V."/>
            <person name="Davis J."/>
            <person name="Dawson E."/>
            <person name="Dhami P.D."/>
            <person name="Dockree C."/>
            <person name="Dodsworth S.J."/>
            <person name="Durbin R.M."/>
            <person name="Ellington A.G."/>
            <person name="Evans K.L."/>
            <person name="Fey J.M."/>
            <person name="Fleming K."/>
            <person name="French L."/>
            <person name="Garner A.A."/>
            <person name="Gilbert J.G.R."/>
            <person name="Goward M.E."/>
            <person name="Grafham D.V."/>
            <person name="Griffiths M.N.D."/>
            <person name="Hall C."/>
            <person name="Hall R.E."/>
            <person name="Hall-Tamlyn G."/>
            <person name="Heathcott R.W."/>
            <person name="Ho S."/>
            <person name="Holmes S."/>
            <person name="Hunt S.E."/>
            <person name="Jones M.C."/>
            <person name="Kershaw J."/>
            <person name="Kimberley A.M."/>
            <person name="King A."/>
            <person name="Laird G.K."/>
            <person name="Langford C.F."/>
            <person name="Leversha M.A."/>
            <person name="Lloyd C."/>
            <person name="Lloyd D.M."/>
            <person name="Martyn I.D."/>
            <person name="Mashreghi-Mohammadi M."/>
            <person name="Matthews L.H."/>
            <person name="Mccann O.T."/>
            <person name="Mcclay J."/>
            <person name="Mclaren S."/>
            <person name="McMurray A.A."/>
            <person name="Milne S.A."/>
            <person name="Mortimore B.J."/>
            <person name="Odell C.N."/>
            <person name="Pavitt R."/>
            <person name="Pearce A.V."/>
            <person name="Pearson D."/>
            <person name="Phillimore B.J.C.T."/>
            <person name="Phillips S.H."/>
            <person name="Plumb R.W."/>
            <person name="Ramsay H."/>
            <person name="Ramsey Y."/>
            <person name="Rogers L."/>
            <person name="Ross M.T."/>
            <person name="Scott C.E."/>
            <person name="Sehra H.K."/>
            <person name="Skuce C.D."/>
            <person name="Smalley S."/>
            <person name="Smith M.L."/>
            <person name="Soderlund C."/>
            <person name="Spragon L."/>
            <person name="Steward C.A."/>
            <person name="Sulston J.E."/>
            <person name="Swann R.M."/>
            <person name="Vaudin M."/>
            <person name="Wall M."/>
            <person name="Wallis J.M."/>
            <person name="Whiteley M.N."/>
            <person name="Willey D.L."/>
            <person name="Williams L."/>
            <person name="Williams S.A."/>
            <person name="Williamson H."/>
            <person name="Wilmer T.E."/>
            <person name="Wilming L."/>
            <person name="Wright C.L."/>
            <person name="Hubbard T."/>
            <person name="Bentley D.R."/>
            <person name="Beck S."/>
            <person name="Rogers J."/>
            <person name="Shimizu N."/>
            <person name="Minoshima S."/>
            <person name="Kawasaki K."/>
            <person name="Sasaki T."/>
            <person name="Asakawa S."/>
            <person name="Kudoh J."/>
            <person name="Shintani A."/>
            <person name="Shibuya K."/>
            <person name="Yoshizaki Y."/>
            <person name="Aoki N."/>
            <person name="Mitsuyama S."/>
            <person name="Roe B.A."/>
            <person name="Chen F."/>
            <person name="Chu L."/>
            <person name="Crabtree J."/>
            <person name="Deschamps S."/>
            <person name="Do A."/>
            <person name="Do T."/>
            <person name="Dorman A."/>
            <person name="Fang F."/>
            <person name="Fu Y."/>
            <person name="Hu P."/>
            <person name="Hua A."/>
            <person name="Kenton S."/>
            <person name="Lai H."/>
            <person name="Lao H.I."/>
            <person name="Lewis J."/>
            <person name="Lewis S."/>
            <person name="Lin S.-P."/>
            <person name="Loh P."/>
            <person name="Malaj E."/>
            <person name="Nguyen T."/>
            <person name="Pan H."/>
            <person name="Phan S."/>
            <person name="Qi S."/>
            <person name="Qian Y."/>
            <person name="Ray L."/>
            <person name="Ren Q."/>
            <person name="Shaull S."/>
            <person name="Sloan D."/>
            <person name="Song L."/>
            <person name="Wang Q."/>
            <person name="Wang Y."/>
            <person name="Wang Z."/>
            <person name="White J."/>
            <person name="Willingham D."/>
            <person name="Wu H."/>
            <person name="Yao Z."/>
            <person name="Zhan M."/>
            <person name="Zhang G."/>
            <person name="Chissoe S."/>
            <person name="Murray J."/>
            <person name="Miller N."/>
            <person name="Minx P."/>
            <person name="Fulton R."/>
            <person name="Johnson D."/>
            <person name="Bemis G."/>
            <person name="Bentley D."/>
            <person name="Bradshaw H."/>
            <person name="Bourne S."/>
            <person name="Cordes M."/>
            <person name="Du Z."/>
            <person name="Fulton L."/>
            <person name="Goela D."/>
            <person name="Graves T."/>
            <person name="Hawkins J."/>
            <person name="Hinds K."/>
            <person name="Kemp K."/>
            <person name="Latreille P."/>
            <person name="Layman D."/>
            <person name="Ozersky P."/>
            <person name="Rohlfing T."/>
            <person name="Scheet P."/>
            <person name="Walker C."/>
            <person name="Wamsley A."/>
            <person name="Wohldmann P."/>
            <person name="Pepin K."/>
            <person name="Nelson J."/>
            <person name="Korf I."/>
            <person name="Bedell J.A."/>
            <person name="Hillier L.W."/>
            <person name="Mardis E."/>
            <person name="Waterston R."/>
            <person name="Wilson R."/>
            <person name="Emanuel B.S."/>
            <person name="Shaikh T."/>
            <person name="Kurahashi H."/>
            <person name="Saitta S."/>
            <person name="Budarf M.L."/>
            <person name="McDermid H.E."/>
            <person name="Johnson A."/>
            <person name="Wong A.C.C."/>
            <person name="Morrow B.E."/>
            <person name="Edelmann L."/>
            <person name="Kim U.J."/>
            <person name="Shizuya H."/>
            <person name="Simon M.I."/>
            <person name="Dumanski J.P."/>
            <person name="Peyrard M."/>
            <person name="Kedra D."/>
            <person name="Seroussi E."/>
            <person name="Fransson I."/>
            <person name="Tapia I."/>
            <person name="Bruder C.E."/>
            <person name="O'Brien K.P."/>
            <person name="Wilkinson P."/>
            <person name="Bodenteich A."/>
            <person name="Hartman K."/>
            <person name="Hu X."/>
            <person name="Khan A.S."/>
            <person name="Lane L."/>
            <person name="Tilahun Y."/>
            <person name="Wright H."/>
        </authorList>
    </citation>
    <scope>NUCLEOTIDE SEQUENCE [LARGE SCALE GENOMIC DNA]</scope>
</reference>
<reference key="5">
    <citation type="submission" date="2005-07" db="EMBL/GenBank/DDBJ databases">
        <authorList>
            <person name="Mural R.J."/>
            <person name="Istrail S."/>
            <person name="Sutton G.G."/>
            <person name="Florea L."/>
            <person name="Halpern A.L."/>
            <person name="Mobarry C.M."/>
            <person name="Lippert R."/>
            <person name="Walenz B."/>
            <person name="Shatkay H."/>
            <person name="Dew I."/>
            <person name="Miller J.R."/>
            <person name="Flanigan M.J."/>
            <person name="Edwards N.J."/>
            <person name="Bolanos R."/>
            <person name="Fasulo D."/>
            <person name="Halldorsson B.V."/>
            <person name="Hannenhalli S."/>
            <person name="Turner R."/>
            <person name="Yooseph S."/>
            <person name="Lu F."/>
            <person name="Nusskern D.R."/>
            <person name="Shue B.C."/>
            <person name="Zheng X.H."/>
            <person name="Zhong F."/>
            <person name="Delcher A.L."/>
            <person name="Huson D.H."/>
            <person name="Kravitz S.A."/>
            <person name="Mouchard L."/>
            <person name="Reinert K."/>
            <person name="Remington K.A."/>
            <person name="Clark A.G."/>
            <person name="Waterman M.S."/>
            <person name="Eichler E.E."/>
            <person name="Adams M.D."/>
            <person name="Hunkapiller M.W."/>
            <person name="Myers E.W."/>
            <person name="Venter J.C."/>
        </authorList>
    </citation>
    <scope>NUCLEOTIDE SEQUENCE [LARGE SCALE GENOMIC DNA]</scope>
</reference>
<reference key="6">
    <citation type="journal article" date="2004" name="Genome Res.">
        <title>The status, quality, and expansion of the NIH full-length cDNA project: the Mammalian Gene Collection (MGC).</title>
        <authorList>
            <consortium name="The MGC Project Team"/>
        </authorList>
    </citation>
    <scope>NUCLEOTIDE SEQUENCE [LARGE SCALE MRNA] (ISOFORM 2)</scope>
    <source>
        <tissue>Pancreas</tissue>
    </source>
</reference>
<reference key="7">
    <citation type="journal article" date="2003" name="Nat. Biotechnol.">
        <title>Exploring proteomes and analyzing protein processing by mass spectrometric identification of sorted N-terminal peptides.</title>
        <authorList>
            <person name="Gevaert K."/>
            <person name="Goethals M."/>
            <person name="Martens L."/>
            <person name="Van Damme J."/>
            <person name="Staes A."/>
            <person name="Thomas G.R."/>
            <person name="Vandekerckhove J."/>
        </authorList>
    </citation>
    <scope>PROTEIN SEQUENCE OF 166-175</scope>
    <source>
        <tissue>Platelet</tissue>
    </source>
</reference>
<reference key="8">
    <citation type="journal article" date="1999" name="Mol. Cell. Biol.">
        <title>The Borgs, a new family of Cdc42 and TC10 GTPase-interacting proteins.</title>
        <authorList>
            <person name="Joberty G."/>
            <person name="Perlungher R.R."/>
            <person name="Macara I.G."/>
        </authorList>
    </citation>
    <scope>INTERACTION WITH RHOQ AND CDC42</scope>
    <source>
        <tissue>Embryo</tissue>
    </source>
</reference>
<reference key="9">
    <citation type="journal article" date="1999" name="Proc. Natl. Acad. Sci. U.S.A.">
        <title>MSE55, a Cdc42 effector protein, induces long cellular extensions in fibroblasts.</title>
        <authorList>
            <person name="Burbelo P.D."/>
            <person name="Snow D.M."/>
            <person name="Bahou W."/>
            <person name="Spiegel S."/>
        </authorList>
    </citation>
    <scope>FUNCTION</scope>
    <scope>INTERACTION WITH CDC42</scope>
    <scope>SUBCELLULAR LOCATION</scope>
    <scope>MUTAGENESIS OF 36-ASP--HIS-47</scope>
</reference>
<reference key="10">
    <citation type="journal article" date="2006" name="Cell">
        <title>Global, in vivo, and site-specific phosphorylation dynamics in signaling networks.</title>
        <authorList>
            <person name="Olsen J.V."/>
            <person name="Blagoev B."/>
            <person name="Gnad F."/>
            <person name="Macek B."/>
            <person name="Kumar C."/>
            <person name="Mortensen P."/>
            <person name="Mann M."/>
        </authorList>
    </citation>
    <scope>IDENTIFICATION BY MASS SPECTROMETRY [LARGE SCALE ANALYSIS]</scope>
    <source>
        <tissue>Cervix carcinoma</tissue>
    </source>
</reference>
<reference key="11">
    <citation type="journal article" date="2008" name="J. Proteome Res.">
        <title>Combining protein-based IMAC, peptide-based IMAC, and MudPIT for efficient phosphoproteomic analysis.</title>
        <authorList>
            <person name="Cantin G.T."/>
            <person name="Yi W."/>
            <person name="Lu B."/>
            <person name="Park S.K."/>
            <person name="Xu T."/>
            <person name="Lee J.-D."/>
            <person name="Yates J.R. III"/>
        </authorList>
    </citation>
    <scope>IDENTIFICATION BY MASS SPECTROMETRY [LARGE SCALE ANALYSIS]</scope>
    <source>
        <tissue>Cervix carcinoma</tissue>
    </source>
</reference>
<reference key="12">
    <citation type="journal article" date="2008" name="Mol. Cell">
        <title>Kinase-selective enrichment enables quantitative phosphoproteomics of the kinome across the cell cycle.</title>
        <authorList>
            <person name="Daub H."/>
            <person name="Olsen J.V."/>
            <person name="Bairlein M."/>
            <person name="Gnad F."/>
            <person name="Oppermann F.S."/>
            <person name="Korner R."/>
            <person name="Greff Z."/>
            <person name="Keri G."/>
            <person name="Stemmann O."/>
            <person name="Mann M."/>
        </authorList>
    </citation>
    <scope>PHOSPHORYLATION [LARGE SCALE ANALYSIS] AT SER-19; SER-101; SER-113; SER-121 AND SER-350</scope>
    <scope>IDENTIFICATION BY MASS SPECTROMETRY [LARGE SCALE ANALYSIS]</scope>
    <source>
        <tissue>Cervix carcinoma</tissue>
    </source>
</reference>
<reference key="13">
    <citation type="journal article" date="2008" name="Proc. Natl. Acad. Sci. U.S.A.">
        <title>A quantitative atlas of mitotic phosphorylation.</title>
        <authorList>
            <person name="Dephoure N."/>
            <person name="Zhou C."/>
            <person name="Villen J."/>
            <person name="Beausoleil S.A."/>
            <person name="Bakalarski C.E."/>
            <person name="Elledge S.J."/>
            <person name="Gygi S.P."/>
        </authorList>
    </citation>
    <scope>PHOSPHORYLATION [LARGE SCALE ANALYSIS] AT SER-121; SER-190; SER-192; SER-195; SER-350 AND SER-353</scope>
    <scope>IDENTIFICATION BY MASS SPECTROMETRY [LARGE SCALE ANALYSIS]</scope>
    <source>
        <tissue>Cervix carcinoma</tissue>
    </source>
</reference>
<reference key="14">
    <citation type="journal article" date="2009" name="Anal. Chem.">
        <title>Lys-N and trypsin cover complementary parts of the phosphoproteome in a refined SCX-based approach.</title>
        <authorList>
            <person name="Gauci S."/>
            <person name="Helbig A.O."/>
            <person name="Slijper M."/>
            <person name="Krijgsveld J."/>
            <person name="Heck A.J."/>
            <person name="Mohammed S."/>
        </authorList>
    </citation>
    <scope>IDENTIFICATION BY MASS SPECTROMETRY [LARGE SCALE ANALYSIS]</scope>
</reference>
<reference key="15">
    <citation type="journal article" date="2010" name="Sci. Signal.">
        <title>Quantitative phosphoproteomics reveals widespread full phosphorylation site occupancy during mitosis.</title>
        <authorList>
            <person name="Olsen J.V."/>
            <person name="Vermeulen M."/>
            <person name="Santamaria A."/>
            <person name="Kumar C."/>
            <person name="Miller M.L."/>
            <person name="Jensen L.J."/>
            <person name="Gnad F."/>
            <person name="Cox J."/>
            <person name="Jensen T.S."/>
            <person name="Nigg E.A."/>
            <person name="Brunak S."/>
            <person name="Mann M."/>
        </authorList>
    </citation>
    <scope>PHOSPHORYLATION [LARGE SCALE ANALYSIS] AT SER-101; SER-113; SER-121; SER-192; SER-350 AND SER-353</scope>
    <scope>IDENTIFICATION BY MASS SPECTROMETRY [LARGE SCALE ANALYSIS]</scope>
    <source>
        <tissue>Cervix carcinoma</tissue>
    </source>
</reference>
<reference key="16">
    <citation type="journal article" date="2011" name="Sci. Signal.">
        <title>System-wide temporal characterization of the proteome and phosphoproteome of human embryonic stem cell differentiation.</title>
        <authorList>
            <person name="Rigbolt K.T."/>
            <person name="Prokhorova T.A."/>
            <person name="Akimov V."/>
            <person name="Henningsen J."/>
            <person name="Johansen P.T."/>
            <person name="Kratchmarova I."/>
            <person name="Kassem M."/>
            <person name="Mann M."/>
            <person name="Olsen J.V."/>
            <person name="Blagoev B."/>
        </authorList>
    </citation>
    <scope>PHOSPHORYLATION [LARGE SCALE ANALYSIS] AT SER-192</scope>
    <scope>IDENTIFICATION BY MASS SPECTROMETRY [LARGE SCALE ANALYSIS]</scope>
</reference>
<reference key="17">
    <citation type="journal article" date="2013" name="J. Proteome Res.">
        <title>Toward a comprehensive characterization of a human cancer cell phosphoproteome.</title>
        <authorList>
            <person name="Zhou H."/>
            <person name="Di Palma S."/>
            <person name="Preisinger C."/>
            <person name="Peng M."/>
            <person name="Polat A.N."/>
            <person name="Heck A.J."/>
            <person name="Mohammed S."/>
        </authorList>
    </citation>
    <scope>PHOSPHORYLATION [LARGE SCALE ANALYSIS] AT SER-27; SER-65; SER-73; SER-77; SER-101; SER-113; SER-121; SER-180; SER-190; SER-192; SER-195; SER-350 AND SER-353</scope>
    <scope>IDENTIFICATION BY MASS SPECTROMETRY [LARGE SCALE ANALYSIS]</scope>
    <source>
        <tissue>Cervix carcinoma</tissue>
        <tissue>Erythroleukemia</tissue>
    </source>
</reference>
<reference key="18">
    <citation type="journal article" date="2014" name="J. Proteomics">
        <title>An enzyme assisted RP-RPLC approach for in-depth analysis of human liver phosphoproteome.</title>
        <authorList>
            <person name="Bian Y."/>
            <person name="Song C."/>
            <person name="Cheng K."/>
            <person name="Dong M."/>
            <person name="Wang F."/>
            <person name="Huang J."/>
            <person name="Sun D."/>
            <person name="Wang L."/>
            <person name="Ye M."/>
            <person name="Zou H."/>
        </authorList>
    </citation>
    <scope>PHOSPHORYLATION [LARGE SCALE ANALYSIS] AT SER-192</scope>
    <scope>IDENTIFICATION BY MASS SPECTROMETRY [LARGE SCALE ANALYSIS]</scope>
    <source>
        <tissue>Liver</tissue>
    </source>
</reference>
<reference key="19">
    <citation type="journal article" date="2014" name="Mol. Cell. Proteomics">
        <title>Immunoaffinity enrichment and mass spectrometry analysis of protein methylation.</title>
        <authorList>
            <person name="Guo A."/>
            <person name="Gu H."/>
            <person name="Zhou J."/>
            <person name="Mulhern D."/>
            <person name="Wang Y."/>
            <person name="Lee K.A."/>
            <person name="Yang V."/>
            <person name="Aguiar M."/>
            <person name="Kornhauser J."/>
            <person name="Jia X."/>
            <person name="Ren J."/>
            <person name="Beausoleil S.A."/>
            <person name="Silva J.C."/>
            <person name="Vemulapalli V."/>
            <person name="Bedford M.T."/>
            <person name="Comb M.J."/>
        </authorList>
    </citation>
    <scope>METHYLATION [LARGE SCALE ANALYSIS] AT ARG-53</scope>
    <scope>IDENTIFICATION BY MASS SPECTROMETRY [LARGE SCALE ANALYSIS]</scope>
    <source>
        <tissue>Colon carcinoma</tissue>
    </source>
</reference>
<keyword id="KW-0025">Alternative splicing</keyword>
<keyword id="KW-0963">Cytoplasm</keyword>
<keyword id="KW-0206">Cytoskeleton</keyword>
<keyword id="KW-0903">Direct protein sequencing</keyword>
<keyword id="KW-0472">Membrane</keyword>
<keyword id="KW-0488">Methylation</keyword>
<keyword id="KW-0597">Phosphoprotein</keyword>
<keyword id="KW-1267">Proteomics identification</keyword>
<keyword id="KW-1185">Reference proteome</keyword>
<keyword id="KW-0677">Repeat</keyword>
<comment type="function">
    <text evidence="5">Probably involved in the organization of the actin cytoskeleton. Induced membrane extensions in fibroblasts.</text>
</comment>
<comment type="subunit">
    <text evidence="5 6">Interacts with RHOQ and CDC42, in a GTP-dependent manner.</text>
</comment>
<comment type="interaction">
    <interactant intactId="EBI-744130">
        <id>Q00587</id>
    </interactant>
    <interactant intactId="EBI-81752">
        <id>P60953</id>
        <label>CDC42</label>
    </interactant>
    <organismsDiffer>false</organismsDiffer>
    <experiments>9</experiments>
</comment>
<comment type="interaction">
    <interactant intactId="EBI-744130">
        <id>Q00587</id>
    </interactant>
    <interactant intactId="EBI-745369">
        <id>Q9H4E7</id>
        <label>DEF6</label>
    </interactant>
    <organismsDiffer>false</organismsDiffer>
    <experiments>3</experiments>
</comment>
<comment type="interaction">
    <interactant intactId="EBI-744130">
        <id>Q00587</id>
    </interactant>
    <interactant intactId="EBI-6285694">
        <id>Q9H4E5</id>
        <label>RHOJ</label>
    </interactant>
    <organismsDiffer>false</organismsDiffer>
    <experiments>3</experiments>
</comment>
<comment type="interaction">
    <interactant intactId="EBI-11027409">
        <id>Q00587-2</id>
    </interactant>
    <interactant intactId="EBI-742909">
        <id>Q9H6L4</id>
        <label>ARMC7</label>
    </interactant>
    <organismsDiffer>false</organismsDiffer>
    <experiments>3</experiments>
</comment>
<comment type="interaction">
    <interactant intactId="EBI-11027409">
        <id>Q00587-2</id>
    </interactant>
    <interactant intactId="EBI-81752">
        <id>P60953</id>
        <label>CDC42</label>
    </interactant>
    <organismsDiffer>false</organismsDiffer>
    <experiments>3</experiments>
</comment>
<comment type="interaction">
    <interactant intactId="EBI-11027409">
        <id>Q00587-2</id>
    </interactant>
    <interactant intactId="EBI-1383852">
        <id>P54646</id>
        <label>PRKAA2</label>
    </interactant>
    <organismsDiffer>false</organismsDiffer>
    <experiments>3</experiments>
</comment>
<comment type="interaction">
    <interactant intactId="EBI-11027409">
        <id>Q00587-2</id>
    </interactant>
    <interactant intactId="EBI-711613">
        <id>P21673</id>
        <label>SAT1</label>
    </interactant>
    <organismsDiffer>false</organismsDiffer>
    <experiments>3</experiments>
</comment>
<comment type="subcellular location">
    <subcellularLocation>
        <location evidence="5">Endomembrane system</location>
        <topology evidence="5">Peripheral membrane protein</topology>
    </subcellularLocation>
    <subcellularLocation>
        <location evidence="5">Cytoplasm</location>
        <location evidence="5">Cytoskeleton</location>
    </subcellularLocation>
</comment>
<comment type="alternative products">
    <event type="alternative splicing"/>
    <isoform>
        <id>Q00587-1</id>
        <name>1</name>
        <sequence type="displayed"/>
    </isoform>
    <isoform>
        <id>Q00587-2</id>
        <name>2</name>
        <sequence type="described" ref="VSP_004325"/>
    </isoform>
</comment>
<comment type="tissue specificity">
    <text>Endothelial and bone marrow stromal cells.</text>
</comment>
<comment type="domain">
    <text>The CRIB domain mediates interaction with CDC42.</text>
</comment>
<comment type="similarity">
    <text evidence="9">Belongs to the BORG/CEP family.</text>
</comment>
<evidence type="ECO:0000250" key="1">
    <source>
        <dbReference type="UniProtKB" id="A1A5P0"/>
    </source>
</evidence>
<evidence type="ECO:0000250" key="2">
    <source>
        <dbReference type="UniProtKB" id="Q91W92"/>
    </source>
</evidence>
<evidence type="ECO:0000255" key="3">
    <source>
        <dbReference type="PROSITE-ProRule" id="PRU00057"/>
    </source>
</evidence>
<evidence type="ECO:0000256" key="4">
    <source>
        <dbReference type="SAM" id="MobiDB-lite"/>
    </source>
</evidence>
<evidence type="ECO:0000269" key="5">
    <source>
    </source>
</evidence>
<evidence type="ECO:0000269" key="6">
    <source>
    </source>
</evidence>
<evidence type="ECO:0000303" key="7">
    <source>
    </source>
</evidence>
<evidence type="ECO:0000303" key="8">
    <source>
    </source>
</evidence>
<evidence type="ECO:0000305" key="9"/>
<evidence type="ECO:0007744" key="10">
    <source>
    </source>
</evidence>
<evidence type="ECO:0007744" key="11">
    <source>
    </source>
</evidence>
<evidence type="ECO:0007744" key="12">
    <source>
    </source>
</evidence>
<evidence type="ECO:0007744" key="13">
    <source>
    </source>
</evidence>
<evidence type="ECO:0007744" key="14">
    <source>
    </source>
</evidence>
<evidence type="ECO:0007744" key="15">
    <source>
    </source>
</evidence>
<evidence type="ECO:0007744" key="16">
    <source>
    </source>
</evidence>
<sequence length="391" mass="40295">MPGPQGGRGAATMSLGKLSPVGWVSSSQGKRRLTADMISHPLGDFRHTMHVGRGGDVFGDTSFLSNHGGSSGSTHRSPRSFLAKKLQLVRRVGAPPRRMASPPAPSPAPPAISPIIKNAISLPQLNQAAYDSLVVGKLSFDSSPTSSTDGHSSYGLDSGFCTISRLPRSEKPHDRDRDGSFPSEPGLRRSDSLLSFRLDLDLGPSLLSELLGVMSLPEAPAAETPAPAANPPAPTANPTGPAANPPATTANPPAPAANPSAPAATPTGPAANPPAPAASSTPHGHCPNGVTAGLGPVAEVKSSPVGGGPRGPAGPALGRHWGAGWDGGHHYPEMDARQERVEVLPQARASWESLDEEWRAPQAGSRTPVPSTVQANTFEFADAEEDDEVKV</sequence>
<dbReference type="EMBL" id="M88338">
    <property type="protein sequence ID" value="AAA36606.1"/>
    <property type="molecule type" value="mRNA"/>
</dbReference>
<dbReference type="EMBL" id="CR456524">
    <property type="protein sequence ID" value="CAG30410.1"/>
    <property type="molecule type" value="mRNA"/>
</dbReference>
<dbReference type="EMBL" id="AK292190">
    <property type="protein sequence ID" value="BAF84879.1"/>
    <property type="molecule type" value="mRNA"/>
</dbReference>
<dbReference type="EMBL" id="AL022315">
    <property type="status" value="NOT_ANNOTATED_CDS"/>
    <property type="molecule type" value="Genomic_DNA"/>
</dbReference>
<dbReference type="EMBL" id="CH471095">
    <property type="protein sequence ID" value="EAW60164.1"/>
    <property type="molecule type" value="Genomic_DNA"/>
</dbReference>
<dbReference type="EMBL" id="BC009356">
    <property type="protein sequence ID" value="AAH09356.1"/>
    <property type="molecule type" value="mRNA"/>
</dbReference>
<dbReference type="CCDS" id="CCDS13949.1">
    <molecule id="Q00587-1"/>
</dbReference>
<dbReference type="PIR" id="A42973">
    <property type="entry name" value="A42973"/>
</dbReference>
<dbReference type="RefSeq" id="NP_689449.1">
    <molecule id="Q00587-1"/>
    <property type="nucleotide sequence ID" value="NM_152243.3"/>
</dbReference>
<dbReference type="RefSeq" id="XP_006724170.1">
    <property type="nucleotide sequence ID" value="XM_006724107.1"/>
</dbReference>
<dbReference type="RefSeq" id="XP_006724171.1">
    <property type="nucleotide sequence ID" value="XM_006724108.1"/>
</dbReference>
<dbReference type="RefSeq" id="XP_006724172.1">
    <property type="nucleotide sequence ID" value="XM_006724109.1"/>
</dbReference>
<dbReference type="RefSeq" id="XP_016884030.1">
    <property type="nucleotide sequence ID" value="XM_017028541.1"/>
</dbReference>
<dbReference type="BioGRID" id="116308">
    <property type="interactions" value="164"/>
</dbReference>
<dbReference type="FunCoup" id="Q00587">
    <property type="interactions" value="752"/>
</dbReference>
<dbReference type="IntAct" id="Q00587">
    <property type="interactions" value="92"/>
</dbReference>
<dbReference type="MINT" id="Q00587"/>
<dbReference type="STRING" id="9606.ENSP00000249014"/>
<dbReference type="GlyGen" id="Q00587">
    <property type="glycosylation" value="3 sites, 1 O-linked glycan (2 sites)"/>
</dbReference>
<dbReference type="iPTMnet" id="Q00587"/>
<dbReference type="PhosphoSitePlus" id="Q00587"/>
<dbReference type="BioMuta" id="CDC42EP1"/>
<dbReference type="DMDM" id="462623"/>
<dbReference type="jPOST" id="Q00587"/>
<dbReference type="MassIVE" id="Q00587"/>
<dbReference type="PaxDb" id="9606-ENSP00000249014"/>
<dbReference type="PeptideAtlas" id="Q00587"/>
<dbReference type="ProteomicsDB" id="57858">
    <molecule id="Q00587-1"/>
</dbReference>
<dbReference type="ProteomicsDB" id="57859">
    <molecule id="Q00587-2"/>
</dbReference>
<dbReference type="Pumba" id="Q00587"/>
<dbReference type="Antibodypedia" id="299">
    <property type="antibodies" value="143 antibodies from 30 providers"/>
</dbReference>
<dbReference type="DNASU" id="11135"/>
<dbReference type="Ensembl" id="ENST00000249014.5">
    <molecule id="Q00587-1"/>
    <property type="protein sequence ID" value="ENSP00000249014.4"/>
    <property type="gene ID" value="ENSG00000128283.7"/>
</dbReference>
<dbReference type="GeneID" id="11135"/>
<dbReference type="KEGG" id="hsa:11135"/>
<dbReference type="MANE-Select" id="ENST00000249014.5">
    <property type="protein sequence ID" value="ENSP00000249014.4"/>
    <property type="RefSeq nucleotide sequence ID" value="NM_152243.3"/>
    <property type="RefSeq protein sequence ID" value="NP_689449.1"/>
</dbReference>
<dbReference type="UCSC" id="uc003asz.5">
    <molecule id="Q00587-1"/>
    <property type="organism name" value="human"/>
</dbReference>
<dbReference type="AGR" id="HGNC:17014"/>
<dbReference type="CTD" id="11135"/>
<dbReference type="DisGeNET" id="11135"/>
<dbReference type="GeneCards" id="CDC42EP1"/>
<dbReference type="HGNC" id="HGNC:17014">
    <property type="gene designation" value="CDC42EP1"/>
</dbReference>
<dbReference type="HPA" id="ENSG00000128283">
    <property type="expression patterns" value="Low tissue specificity"/>
</dbReference>
<dbReference type="MIM" id="606084">
    <property type="type" value="gene"/>
</dbReference>
<dbReference type="neXtProt" id="NX_Q00587"/>
<dbReference type="OpenTargets" id="ENSG00000128283"/>
<dbReference type="PharmGKB" id="PA38430"/>
<dbReference type="VEuPathDB" id="HostDB:ENSG00000128283"/>
<dbReference type="eggNOG" id="ENOG502RZ2H">
    <property type="taxonomic scope" value="Eukaryota"/>
</dbReference>
<dbReference type="GeneTree" id="ENSGT00940000160068"/>
<dbReference type="HOGENOM" id="CLU_787446_0_0_1"/>
<dbReference type="InParanoid" id="Q00587"/>
<dbReference type="OMA" id="SWESQDE"/>
<dbReference type="OrthoDB" id="9887345at2759"/>
<dbReference type="PAN-GO" id="Q00587">
    <property type="GO annotations" value="7 GO annotations based on evolutionary models"/>
</dbReference>
<dbReference type="PhylomeDB" id="Q00587"/>
<dbReference type="TreeFam" id="TF331725"/>
<dbReference type="PathwayCommons" id="Q00587"/>
<dbReference type="Reactome" id="R-HSA-9013148">
    <property type="pathway name" value="CDC42 GTPase cycle"/>
</dbReference>
<dbReference type="Reactome" id="R-HSA-9013149">
    <property type="pathway name" value="RAC1 GTPase cycle"/>
</dbReference>
<dbReference type="Reactome" id="R-HSA-9013404">
    <property type="pathway name" value="RAC2 GTPase cycle"/>
</dbReference>
<dbReference type="Reactome" id="R-HSA-9013406">
    <property type="pathway name" value="RHOQ GTPase cycle"/>
</dbReference>
<dbReference type="Reactome" id="R-HSA-9013408">
    <property type="pathway name" value="RHOG GTPase cycle"/>
</dbReference>
<dbReference type="Reactome" id="R-HSA-9013409">
    <property type="pathway name" value="RHOJ GTPase cycle"/>
</dbReference>
<dbReference type="Reactome" id="R-HSA-9013423">
    <property type="pathway name" value="RAC3 GTPase cycle"/>
</dbReference>
<dbReference type="SignaLink" id="Q00587"/>
<dbReference type="SIGNOR" id="Q00587"/>
<dbReference type="BioGRID-ORCS" id="11135">
    <property type="hits" value="10 hits in 1159 CRISPR screens"/>
</dbReference>
<dbReference type="ChiTaRS" id="CDC42EP1">
    <property type="organism name" value="human"/>
</dbReference>
<dbReference type="GeneWiki" id="CDC42EP1"/>
<dbReference type="GenomeRNAi" id="11135"/>
<dbReference type="Pharos" id="Q00587">
    <property type="development level" value="Tbio"/>
</dbReference>
<dbReference type="PRO" id="PR:Q00587"/>
<dbReference type="Proteomes" id="UP000005640">
    <property type="component" value="Chromosome 22"/>
</dbReference>
<dbReference type="RNAct" id="Q00587">
    <property type="molecule type" value="protein"/>
</dbReference>
<dbReference type="Bgee" id="ENSG00000128283">
    <property type="expression patterns" value="Expressed in body of pancreas and 165 other cell types or tissues"/>
</dbReference>
<dbReference type="ExpressionAtlas" id="Q00587">
    <property type="expression patterns" value="baseline and differential"/>
</dbReference>
<dbReference type="GO" id="GO:0005912">
    <property type="term" value="C:adherens junction"/>
    <property type="evidence" value="ECO:0007005"/>
    <property type="project" value="BHF-UCL"/>
</dbReference>
<dbReference type="GO" id="GO:0005737">
    <property type="term" value="C:cytoplasm"/>
    <property type="evidence" value="ECO:0000318"/>
    <property type="project" value="GO_Central"/>
</dbReference>
<dbReference type="GO" id="GO:0005856">
    <property type="term" value="C:cytoskeleton"/>
    <property type="evidence" value="ECO:0000318"/>
    <property type="project" value="GO_Central"/>
</dbReference>
<dbReference type="GO" id="GO:0005829">
    <property type="term" value="C:cytosol"/>
    <property type="evidence" value="ECO:0000304"/>
    <property type="project" value="Reactome"/>
</dbReference>
<dbReference type="GO" id="GO:0012505">
    <property type="term" value="C:endomembrane system"/>
    <property type="evidence" value="ECO:0007669"/>
    <property type="project" value="UniProtKB-SubCell"/>
</dbReference>
<dbReference type="GO" id="GO:0005925">
    <property type="term" value="C:focal adhesion"/>
    <property type="evidence" value="ECO:0007005"/>
    <property type="project" value="UniProtKB"/>
</dbReference>
<dbReference type="GO" id="GO:0005886">
    <property type="term" value="C:plasma membrane"/>
    <property type="evidence" value="ECO:0000318"/>
    <property type="project" value="GO_Central"/>
</dbReference>
<dbReference type="GO" id="GO:0098641">
    <property type="term" value="F:cadherin binding involved in cell-cell adhesion"/>
    <property type="evidence" value="ECO:0007005"/>
    <property type="project" value="BHF-UCL"/>
</dbReference>
<dbReference type="GO" id="GO:0031267">
    <property type="term" value="F:small GTPase binding"/>
    <property type="evidence" value="ECO:0000318"/>
    <property type="project" value="GO_Central"/>
</dbReference>
<dbReference type="GO" id="GO:0030838">
    <property type="term" value="P:positive regulation of actin filament polymerization"/>
    <property type="evidence" value="ECO:0000318"/>
    <property type="project" value="GO_Central"/>
</dbReference>
<dbReference type="GO" id="GO:0031274">
    <property type="term" value="P:positive regulation of pseudopodium assembly"/>
    <property type="evidence" value="ECO:0000314"/>
    <property type="project" value="UniProtKB"/>
</dbReference>
<dbReference type="GO" id="GO:0008360">
    <property type="term" value="P:regulation of cell shape"/>
    <property type="evidence" value="ECO:0000314"/>
    <property type="project" value="UniProtKB"/>
</dbReference>
<dbReference type="GO" id="GO:0007266">
    <property type="term" value="P:Rho protein signal transduction"/>
    <property type="evidence" value="ECO:0000318"/>
    <property type="project" value="GO_Central"/>
</dbReference>
<dbReference type="InterPro" id="IPR029273">
    <property type="entry name" value="Cdc42_effect-like"/>
</dbReference>
<dbReference type="InterPro" id="IPR051296">
    <property type="entry name" value="Cdc42_Effector_BORG/CEP"/>
</dbReference>
<dbReference type="InterPro" id="IPR000095">
    <property type="entry name" value="CRIB_dom"/>
</dbReference>
<dbReference type="PANTHER" id="PTHR15344:SF7">
    <property type="entry name" value="CDC42 EFFECTOR PROTEIN 1"/>
    <property type="match status" value="1"/>
</dbReference>
<dbReference type="PANTHER" id="PTHR15344">
    <property type="entry name" value="CDC42 EFFECTOR PROTEIN BORG"/>
    <property type="match status" value="1"/>
</dbReference>
<dbReference type="Pfam" id="PF14957">
    <property type="entry name" value="BORG_CEP"/>
    <property type="match status" value="1"/>
</dbReference>
<dbReference type="Pfam" id="PF00786">
    <property type="entry name" value="PBD"/>
    <property type="match status" value="1"/>
</dbReference>
<dbReference type="PRINTS" id="PR01217">
    <property type="entry name" value="PRICHEXTENSN"/>
</dbReference>
<dbReference type="SMART" id="SM00285">
    <property type="entry name" value="PBD"/>
    <property type="match status" value="1"/>
</dbReference>
<dbReference type="PROSITE" id="PS50108">
    <property type="entry name" value="CRIB"/>
    <property type="match status" value="1"/>
</dbReference>
<gene>
    <name type="primary">CDC42EP1</name>
    <name type="synonym">BORG5</name>
    <name type="synonym">CEP1</name>
    <name type="synonym">MSE55</name>
</gene>
<name>BORG5_HUMAN</name>